<comment type="function">
    <text evidence="1 2">Component of a caprolactamase involved in the degradation of caprolactam, an industrial compound mainly used in the production of Nylon 6 (PubMed:29850960, PubMed:33826169). Catalyzes the ATP-dependent hydrolysis of the caprolactam ring to form 6-aminocaproic acid (6-ACA) (PubMed:29850960, PubMed:33826169). The alpha subunit is responsible for ATP-dependent substrate phosphorylation (PubMed:33826169). The enzyme cannot use 5-oxoproline (PubMed:29850960).</text>
</comment>
<comment type="activity regulation">
    <text evidence="2">Activity is dependent on the presence of ATP and bicarbonate (PubMed:33826169). The requirement for bicarbonate may be related to allosteric activation through conformational effects, but it is also conceivable that carboxyphosphate is formed and acts as a mediator in caprolactam activation, forming carboxy- or phospholactim (PubMed:33826169).</text>
</comment>
<comment type="subunit">
    <text evidence="2">The caprolactamase is a heterotetramer composed of two alpha subunits (CapA) and two beta subunits (CapB).</text>
</comment>
<comment type="induction">
    <text evidence="1">Induced during growth on caprolactam.</text>
</comment>
<comment type="domain">
    <text evidence="2">The tetrameric structure and the presence of a connecting tunnel suggest that the activated lactim moves from the CapA active site to the CapB active site without release to solvent.</text>
</comment>
<comment type="similarity">
    <text evidence="5">Belongs to the HyuA family.</text>
</comment>
<evidence type="ECO:0000269" key="1">
    <source>
    </source>
</evidence>
<evidence type="ECO:0000269" key="2">
    <source>
    </source>
</evidence>
<evidence type="ECO:0000303" key="3">
    <source>
    </source>
</evidence>
<evidence type="ECO:0000303" key="4">
    <source>
    </source>
</evidence>
<evidence type="ECO:0000305" key="5"/>
<evidence type="ECO:0000305" key="6">
    <source>
    </source>
</evidence>
<evidence type="ECO:0000312" key="7">
    <source>
        <dbReference type="EMBL" id="PYY72393.1"/>
    </source>
</evidence>
<evidence type="ECO:0007744" key="8">
    <source>
        <dbReference type="PDB" id="6YRA"/>
    </source>
</evidence>
<organism>
    <name type="scientific">Pseudomonas jessenii</name>
    <dbReference type="NCBI Taxonomy" id="77298"/>
    <lineage>
        <taxon>Bacteria</taxon>
        <taxon>Pseudomonadati</taxon>
        <taxon>Pseudomonadota</taxon>
        <taxon>Gammaproteobacteria</taxon>
        <taxon>Pseudomonadales</taxon>
        <taxon>Pseudomonadaceae</taxon>
        <taxon>Pseudomonas</taxon>
    </lineage>
</organism>
<name>CAPLA_PSEJE</name>
<keyword id="KW-0002">3D-structure</keyword>
<keyword id="KW-0067">ATP-binding</keyword>
<keyword id="KW-0378">Hydrolase</keyword>
<keyword id="KW-0547">Nucleotide-binding</keyword>
<reference key="1">
    <citation type="journal article" date="2018" name="Appl. Microbiol. Biotechnol.">
        <title>Characterization of the caprolactam degradation pathway in Pseudomonas jessenii using mass spectrometry-based proteomics.</title>
        <authorList>
            <person name="Otzen M."/>
            <person name="Palacio C."/>
            <person name="Janssen D.B."/>
        </authorList>
    </citation>
    <scope>NUCLEOTIDE SEQUENCE [LARGE SCALE GENOMIC DNA]</scope>
    <scope>FUNCTION AS A CAPROLACTAMASE</scope>
    <scope>INDUCTION</scope>
    <source>
        <strain>DSM 106008 / GO3</strain>
    </source>
</reference>
<reference evidence="8" key="2">
    <citation type="journal article" date="2021" name="Proteins">
        <title>Catalytic and structural properties of ATP-dependent caprolactamase from Pseudomonas jessenii.</title>
        <authorList>
            <person name="Marjanovic A."/>
            <person name="Rozeboom H.J."/>
            <person name="de Vries M.S."/>
            <person name="Mayer C."/>
            <person name="Otzen M."/>
            <person name="Wijma H.J."/>
            <person name="Janssen D.B."/>
        </authorList>
    </citation>
    <scope>X-RAY CRYSTALLOGRAPHY (4.00 ANGSTROMS)</scope>
    <scope>FUNCTION AS A CAPROLACTAMASE</scope>
    <scope>ACTIVITY REGULATION</scope>
    <scope>SUBUNIT</scope>
    <scope>DOMAIN</scope>
    <scope>MUTAGENESIS OF ASP-11 AND ASP-295</scope>
    <source>
        <strain>DSM 106008 / GO3</strain>
    </source>
</reference>
<protein>
    <recommendedName>
        <fullName evidence="4">Caprolactamase subunit alpha</fullName>
        <ecNumber evidence="6">3.5.2.-</ecNumber>
    </recommendedName>
</protein>
<proteinExistence type="evidence at protein level"/>
<dbReference type="EC" id="3.5.2.-" evidence="6"/>
<dbReference type="EMBL" id="PDLL01000005">
    <property type="protein sequence ID" value="PYY72393.1"/>
    <property type="molecule type" value="Genomic_DNA"/>
</dbReference>
<dbReference type="RefSeq" id="WP_064361164.1">
    <property type="nucleotide sequence ID" value="NZ_PDLL01000005.1"/>
</dbReference>
<dbReference type="PDB" id="6YRA">
    <property type="method" value="X-ray"/>
    <property type="resolution" value="4.00 A"/>
    <property type="chains" value="A/C=1-696"/>
</dbReference>
<dbReference type="PDBsum" id="6YRA"/>
<dbReference type="SMR" id="A0A2W0EVE0"/>
<dbReference type="OrthoDB" id="9768323at2"/>
<dbReference type="Proteomes" id="UP000247437">
    <property type="component" value="Unassembled WGS sequence"/>
</dbReference>
<dbReference type="GO" id="GO:0005829">
    <property type="term" value="C:cytosol"/>
    <property type="evidence" value="ECO:0007669"/>
    <property type="project" value="TreeGrafter"/>
</dbReference>
<dbReference type="GO" id="GO:0017168">
    <property type="term" value="F:5-oxoprolinase (ATP-hydrolyzing) activity"/>
    <property type="evidence" value="ECO:0007669"/>
    <property type="project" value="TreeGrafter"/>
</dbReference>
<dbReference type="GO" id="GO:0005524">
    <property type="term" value="F:ATP binding"/>
    <property type="evidence" value="ECO:0007669"/>
    <property type="project" value="UniProtKB-KW"/>
</dbReference>
<dbReference type="GO" id="GO:0006749">
    <property type="term" value="P:glutathione metabolic process"/>
    <property type="evidence" value="ECO:0007669"/>
    <property type="project" value="TreeGrafter"/>
</dbReference>
<dbReference type="InterPro" id="IPR049517">
    <property type="entry name" value="ACX-like_C"/>
</dbReference>
<dbReference type="InterPro" id="IPR043129">
    <property type="entry name" value="ATPase_NBD"/>
</dbReference>
<dbReference type="InterPro" id="IPR008040">
    <property type="entry name" value="Hydant_A_N"/>
</dbReference>
<dbReference type="InterPro" id="IPR002821">
    <property type="entry name" value="Hydantoinase_A"/>
</dbReference>
<dbReference type="InterPro" id="IPR045079">
    <property type="entry name" value="Oxoprolinase-like"/>
</dbReference>
<dbReference type="PANTHER" id="PTHR11365">
    <property type="entry name" value="5-OXOPROLINASE RELATED"/>
    <property type="match status" value="1"/>
</dbReference>
<dbReference type="PANTHER" id="PTHR11365:SF23">
    <property type="entry name" value="HYPOTHETICAL 5-OXOPROLINASE (EUROFUNG)-RELATED"/>
    <property type="match status" value="1"/>
</dbReference>
<dbReference type="Pfam" id="PF19278">
    <property type="entry name" value="Hydant_A_C"/>
    <property type="match status" value="1"/>
</dbReference>
<dbReference type="Pfam" id="PF05378">
    <property type="entry name" value="Hydant_A_N"/>
    <property type="match status" value="1"/>
</dbReference>
<dbReference type="Pfam" id="PF01968">
    <property type="entry name" value="Hydantoinase_A"/>
    <property type="match status" value="1"/>
</dbReference>
<dbReference type="SUPFAM" id="SSF53067">
    <property type="entry name" value="Actin-like ATPase domain"/>
    <property type="match status" value="1"/>
</dbReference>
<sequence length="696" mass="75342">MSKQQYRLGIDAGGTFTDFILADHQGNVQLFKAPSTPHDGTLAIRNGLAQIADALGRTPAEIIADCDLCINGTTVALNALIEKTGVKVGLLCTDGHEDSLEIRLGHKEDGHRYDATYPPAHMLVPRHLRRPIGGRIISDGSEFSPLDEAAIHAAIDYFREQQVQAVAISFVWSVRNPSHEQRAMAMVRAALPDVFVCSGHEVFPQIREYTRTSTTVVNAYLSPVMGRYIERIDALFEELGAQQPTRYFQSNGGLAPGVVMRERAVNAINSGPASAPQAGLCVAQPFGIDNVITVDMGGTSFDITLSKGGRTNFSKDSDFLRYRIGVPMIQVETLGAGGGSIAHLDDFGMLQVGPRSAGANPGPVCYGKGGVEPTVTDANLALGYLADGALLGGSIRLNRQAAIDAIRSKIAEPLGISVERAAVGIITLVNLSMVSGIRRVSIERGYDPRDFALIGAGGAAGMHVMRLAEEIGSKVVLIPKVASGLCAFGQILSDIRYDQLTTLPMRLDDEFVDLEQLNQALQQLRERGMTNLRDDGFGGDNRIECQYSLEIRYLGQIHECSVELSCDRLDRSSLAALRESFHQRHKALFSYSEPNSPVELVNLECSVIARLQRPPMPELATPLKATAAIPAGHRPMLFNAQDDWQDTPVYNGDRIEVGQIIQGPCVIEEATTNILVPPGWRVSLDPSATYELTPGH</sequence>
<feature type="chain" id="PRO_0000458041" description="Caprolactamase subunit alpha">
    <location>
        <begin position="1"/>
        <end position="696"/>
    </location>
</feature>
<feature type="mutagenesis site" description="Retains very low activity." evidence="2">
    <original>D</original>
    <variation>A</variation>
    <location>
        <position position="11"/>
    </location>
</feature>
<feature type="mutagenesis site" description="Retains very low activity." evidence="2">
    <original>D</original>
    <variation>A</variation>
    <location>
        <position position="295"/>
    </location>
</feature>
<accession>A0A2W0EVE0</accession>
<gene>
    <name evidence="3" type="primary">capA</name>
    <name evidence="7" type="ORF">CRX42_01175</name>
</gene>